<evidence type="ECO:0000255" key="1">
    <source>
        <dbReference type="HAMAP-Rule" id="MF_00607"/>
    </source>
</evidence>
<name>RSMA_LACPL</name>
<gene>
    <name evidence="1" type="primary">rsmA</name>
    <name evidence="1" type="synonym">ksgA</name>
    <name type="ordered locus">lp_0458</name>
</gene>
<feature type="chain" id="PRO_0000101546" description="Ribosomal RNA small subunit methyltransferase A">
    <location>
        <begin position="1"/>
        <end position="296"/>
    </location>
</feature>
<feature type="binding site" evidence="1">
    <location>
        <position position="32"/>
    </location>
    <ligand>
        <name>S-adenosyl-L-methionine</name>
        <dbReference type="ChEBI" id="CHEBI:59789"/>
    </ligand>
</feature>
<feature type="binding site" evidence="1">
    <location>
        <position position="34"/>
    </location>
    <ligand>
        <name>S-adenosyl-L-methionine</name>
        <dbReference type="ChEBI" id="CHEBI:59789"/>
    </ligand>
</feature>
<feature type="binding site" evidence="1">
    <location>
        <position position="59"/>
    </location>
    <ligand>
        <name>S-adenosyl-L-methionine</name>
        <dbReference type="ChEBI" id="CHEBI:59789"/>
    </ligand>
</feature>
<feature type="binding site" evidence="1">
    <location>
        <position position="80"/>
    </location>
    <ligand>
        <name>S-adenosyl-L-methionine</name>
        <dbReference type="ChEBI" id="CHEBI:59789"/>
    </ligand>
</feature>
<feature type="binding site" evidence="1">
    <location>
        <position position="105"/>
    </location>
    <ligand>
        <name>S-adenosyl-L-methionine</name>
        <dbReference type="ChEBI" id="CHEBI:59789"/>
    </ligand>
</feature>
<feature type="binding site" evidence="1">
    <location>
        <position position="130"/>
    </location>
    <ligand>
        <name>S-adenosyl-L-methionine</name>
        <dbReference type="ChEBI" id="CHEBI:59789"/>
    </ligand>
</feature>
<organism>
    <name type="scientific">Lactiplantibacillus plantarum (strain ATCC BAA-793 / NCIMB 8826 / WCFS1)</name>
    <name type="common">Lactobacillus plantarum</name>
    <dbReference type="NCBI Taxonomy" id="220668"/>
    <lineage>
        <taxon>Bacteria</taxon>
        <taxon>Bacillati</taxon>
        <taxon>Bacillota</taxon>
        <taxon>Bacilli</taxon>
        <taxon>Lactobacillales</taxon>
        <taxon>Lactobacillaceae</taxon>
        <taxon>Lactiplantibacillus</taxon>
    </lineage>
</organism>
<proteinExistence type="inferred from homology"/>
<accession>Q88Z93</accession>
<accession>F9UU41</accession>
<dbReference type="EC" id="2.1.1.182" evidence="1"/>
<dbReference type="EMBL" id="AL935263">
    <property type="protein sequence ID" value="CCC77961.1"/>
    <property type="molecule type" value="Genomic_DNA"/>
</dbReference>
<dbReference type="RefSeq" id="WP_011101015.1">
    <property type="nucleotide sequence ID" value="NC_004567.2"/>
</dbReference>
<dbReference type="RefSeq" id="YP_004888475.1">
    <property type="nucleotide sequence ID" value="NC_004567.2"/>
</dbReference>
<dbReference type="SMR" id="Q88Z93"/>
<dbReference type="STRING" id="220668.lp_0458"/>
<dbReference type="EnsemblBacteria" id="CCC77961">
    <property type="protein sequence ID" value="CCC77961"/>
    <property type="gene ID" value="lp_0458"/>
</dbReference>
<dbReference type="KEGG" id="lpl:lp_0458"/>
<dbReference type="PATRIC" id="fig|220668.9.peg.378"/>
<dbReference type="eggNOG" id="COG0030">
    <property type="taxonomic scope" value="Bacteria"/>
</dbReference>
<dbReference type="HOGENOM" id="CLU_041220_0_0_9"/>
<dbReference type="OrthoDB" id="9814755at2"/>
<dbReference type="PhylomeDB" id="Q88Z93"/>
<dbReference type="Proteomes" id="UP000000432">
    <property type="component" value="Chromosome"/>
</dbReference>
<dbReference type="GO" id="GO:0005829">
    <property type="term" value="C:cytosol"/>
    <property type="evidence" value="ECO:0007669"/>
    <property type="project" value="TreeGrafter"/>
</dbReference>
<dbReference type="GO" id="GO:0052908">
    <property type="term" value="F:16S rRNA (adenine(1518)-N(6)/adenine(1519)-N(6))-dimethyltransferase activity"/>
    <property type="evidence" value="ECO:0007669"/>
    <property type="project" value="UniProtKB-EC"/>
</dbReference>
<dbReference type="GO" id="GO:0003723">
    <property type="term" value="F:RNA binding"/>
    <property type="evidence" value="ECO:0007669"/>
    <property type="project" value="UniProtKB-KW"/>
</dbReference>
<dbReference type="CDD" id="cd02440">
    <property type="entry name" value="AdoMet_MTases"/>
    <property type="match status" value="1"/>
</dbReference>
<dbReference type="FunFam" id="3.40.50.150:FF:000023">
    <property type="entry name" value="Ribosomal RNA small subunit methyltransferase A"/>
    <property type="match status" value="1"/>
</dbReference>
<dbReference type="Gene3D" id="1.10.8.100">
    <property type="entry name" value="Ribosomal RNA adenine dimethylase-like, domain 2"/>
    <property type="match status" value="1"/>
</dbReference>
<dbReference type="Gene3D" id="3.40.50.150">
    <property type="entry name" value="Vaccinia Virus protein VP39"/>
    <property type="match status" value="1"/>
</dbReference>
<dbReference type="HAMAP" id="MF_00607">
    <property type="entry name" value="16SrRNA_methyltr_A"/>
    <property type="match status" value="1"/>
</dbReference>
<dbReference type="InterPro" id="IPR001737">
    <property type="entry name" value="KsgA/Erm"/>
</dbReference>
<dbReference type="InterPro" id="IPR023165">
    <property type="entry name" value="rRNA_Ade_diMease-like_C"/>
</dbReference>
<dbReference type="InterPro" id="IPR020596">
    <property type="entry name" value="rRNA_Ade_Mease_Trfase_CS"/>
</dbReference>
<dbReference type="InterPro" id="IPR020598">
    <property type="entry name" value="rRNA_Ade_methylase_Trfase_N"/>
</dbReference>
<dbReference type="InterPro" id="IPR011530">
    <property type="entry name" value="rRNA_adenine_dimethylase"/>
</dbReference>
<dbReference type="InterPro" id="IPR029063">
    <property type="entry name" value="SAM-dependent_MTases_sf"/>
</dbReference>
<dbReference type="NCBIfam" id="TIGR00755">
    <property type="entry name" value="ksgA"/>
    <property type="match status" value="1"/>
</dbReference>
<dbReference type="PANTHER" id="PTHR11727">
    <property type="entry name" value="DIMETHYLADENOSINE TRANSFERASE"/>
    <property type="match status" value="1"/>
</dbReference>
<dbReference type="PANTHER" id="PTHR11727:SF7">
    <property type="entry name" value="DIMETHYLADENOSINE TRANSFERASE-RELATED"/>
    <property type="match status" value="1"/>
</dbReference>
<dbReference type="Pfam" id="PF00398">
    <property type="entry name" value="RrnaAD"/>
    <property type="match status" value="1"/>
</dbReference>
<dbReference type="SMART" id="SM00650">
    <property type="entry name" value="rADc"/>
    <property type="match status" value="1"/>
</dbReference>
<dbReference type="SUPFAM" id="SSF53335">
    <property type="entry name" value="S-adenosyl-L-methionine-dependent methyltransferases"/>
    <property type="match status" value="1"/>
</dbReference>
<dbReference type="PROSITE" id="PS01131">
    <property type="entry name" value="RRNA_A_DIMETH"/>
    <property type="match status" value="1"/>
</dbReference>
<dbReference type="PROSITE" id="PS51689">
    <property type="entry name" value="SAM_RNA_A_N6_MT"/>
    <property type="match status" value="1"/>
</dbReference>
<keyword id="KW-0963">Cytoplasm</keyword>
<keyword id="KW-0489">Methyltransferase</keyword>
<keyword id="KW-1185">Reference proteome</keyword>
<keyword id="KW-0694">RNA-binding</keyword>
<keyword id="KW-0698">rRNA processing</keyword>
<keyword id="KW-0949">S-adenosyl-L-methionine</keyword>
<keyword id="KW-0808">Transferase</keyword>
<reference key="1">
    <citation type="journal article" date="2003" name="Proc. Natl. Acad. Sci. U.S.A.">
        <title>Complete genome sequence of Lactobacillus plantarum WCFS1.</title>
        <authorList>
            <person name="Kleerebezem M."/>
            <person name="Boekhorst J."/>
            <person name="van Kranenburg R."/>
            <person name="Molenaar D."/>
            <person name="Kuipers O.P."/>
            <person name="Leer R."/>
            <person name="Tarchini R."/>
            <person name="Peters S.A."/>
            <person name="Sandbrink H.M."/>
            <person name="Fiers M.W.E.J."/>
            <person name="Stiekema W."/>
            <person name="Klein Lankhorst R.M."/>
            <person name="Bron P.A."/>
            <person name="Hoffer S.M."/>
            <person name="Nierop Groot M.N."/>
            <person name="Kerkhoven R."/>
            <person name="De Vries M."/>
            <person name="Ursing B."/>
            <person name="De Vos W.M."/>
            <person name="Siezen R.J."/>
        </authorList>
    </citation>
    <scope>NUCLEOTIDE SEQUENCE [LARGE SCALE GENOMIC DNA]</scope>
    <source>
        <strain>ATCC BAA-793 / NCIMB 8826 / WCFS1</strain>
    </source>
</reference>
<reference key="2">
    <citation type="journal article" date="2012" name="J. Bacteriol.">
        <title>Complete resequencing and reannotation of the Lactobacillus plantarum WCFS1 genome.</title>
        <authorList>
            <person name="Siezen R.J."/>
            <person name="Francke C."/>
            <person name="Renckens B."/>
            <person name="Boekhorst J."/>
            <person name="Wels M."/>
            <person name="Kleerebezem M."/>
            <person name="van Hijum S.A."/>
        </authorList>
    </citation>
    <scope>NUCLEOTIDE SEQUENCE [LARGE SCALE GENOMIC DNA]</scope>
    <scope>GENOME REANNOTATION</scope>
    <source>
        <strain>ATCC BAA-793 / NCIMB 8826 / WCFS1</strain>
    </source>
</reference>
<sequence>MMSRDLDIANPARTRAIMHTYGLQVKKSLGQNFLTDQNVLHNIVATADIGTNDNVIEIGPGIGALTEYLARAAHHVLAFEIDDRLLPILDETLADYDNVTVVNQDILKADLAAMISEHLDNERPLKLVANLPYYITTPILMNILAGDVAFENIVVMMQKEVADRLAAEPGTKAYGALTIAVQYRMAAEMAMVVPRTVFVPSPNVDSAIVKLTALPLRTHVPFDEAAFFKVVKAGFAHRRKNLWNNLQSLFGKQPETKTAIQQALDIATIDPKIRAERLTVDEFITLTDALHQADLL</sequence>
<comment type="function">
    <text evidence="1">Specifically dimethylates two adjacent adenosines (A1518 and A1519) in the loop of a conserved hairpin near the 3'-end of 16S rRNA in the 30S particle. May play a critical role in biogenesis of 30S subunits.</text>
</comment>
<comment type="catalytic activity">
    <reaction evidence="1">
        <text>adenosine(1518)/adenosine(1519) in 16S rRNA + 4 S-adenosyl-L-methionine = N(6)-dimethyladenosine(1518)/N(6)-dimethyladenosine(1519) in 16S rRNA + 4 S-adenosyl-L-homocysteine + 4 H(+)</text>
        <dbReference type="Rhea" id="RHEA:19609"/>
        <dbReference type="Rhea" id="RHEA-COMP:10232"/>
        <dbReference type="Rhea" id="RHEA-COMP:10233"/>
        <dbReference type="ChEBI" id="CHEBI:15378"/>
        <dbReference type="ChEBI" id="CHEBI:57856"/>
        <dbReference type="ChEBI" id="CHEBI:59789"/>
        <dbReference type="ChEBI" id="CHEBI:74411"/>
        <dbReference type="ChEBI" id="CHEBI:74493"/>
        <dbReference type="EC" id="2.1.1.182"/>
    </reaction>
</comment>
<comment type="subcellular location">
    <subcellularLocation>
        <location evidence="1">Cytoplasm</location>
    </subcellularLocation>
</comment>
<comment type="similarity">
    <text evidence="1">Belongs to the class I-like SAM-binding methyltransferase superfamily. rRNA adenine N(6)-methyltransferase family. RsmA subfamily.</text>
</comment>
<protein>
    <recommendedName>
        <fullName evidence="1">Ribosomal RNA small subunit methyltransferase A</fullName>
        <ecNumber evidence="1">2.1.1.182</ecNumber>
    </recommendedName>
    <alternativeName>
        <fullName evidence="1">16S rRNA (adenine(1518)-N(6)/adenine(1519)-N(6))-dimethyltransferase</fullName>
    </alternativeName>
    <alternativeName>
        <fullName evidence="1">16S rRNA dimethyladenosine transferase</fullName>
    </alternativeName>
    <alternativeName>
        <fullName evidence="1">16S rRNA dimethylase</fullName>
    </alternativeName>
    <alternativeName>
        <fullName evidence="1">S-adenosylmethionine-6-N', N'-adenosyl(rRNA) dimethyltransferase</fullName>
    </alternativeName>
</protein>